<proteinExistence type="evidence at protein level"/>
<evidence type="ECO:0000269" key="1">
    <source>
    </source>
</evidence>
<evidence type="ECO:0000269" key="2">
    <source>
    </source>
</evidence>
<evidence type="ECO:0000305" key="3"/>
<feature type="signal peptide" evidence="1 2">
    <location>
        <begin position="1"/>
        <end position="35"/>
    </location>
</feature>
<feature type="chain" id="PRO_0000033274" description="Protease inhibitor">
    <location>
        <begin position="36"/>
        <end position="144"/>
    </location>
</feature>
<feature type="site" description="Reactive bond">
    <location>
        <begin position="104"/>
        <end position="105"/>
    </location>
</feature>
<feature type="disulfide bond">
    <location>
        <begin position="66"/>
        <end position="81"/>
    </location>
</feature>
<feature type="disulfide bond">
    <location>
        <begin position="102"/>
        <end position="132"/>
    </location>
</feature>
<sequence length="144" mass="14433">MRNTARWAATLGLTATAVCGPLAGASLASPATAPASLYAPSALVLTVGHGESAATAAPLRAVTLTCAPTASGTHPAAAAACAELRAAHGDPSALAAEDSVMCTREYAPVVVTVDGVWQGRRLSYERTFANECVKNAGSASVFTF</sequence>
<accession>P61153</accession>
<accession>P28591</accession>
<accession>Q9R644</accession>
<protein>
    <recommendedName>
        <fullName>Protease inhibitor</fullName>
    </recommendedName>
    <alternativeName>
        <fullName>SILA-3</fullName>
    </alternativeName>
    <alternativeName>
        <fullName>SLPI</fullName>
    </alternativeName>
    <alternativeName>
        <fullName>Trypsin inhibitor STI1</fullName>
    </alternativeName>
</protein>
<comment type="function">
    <text>Strong inhibitory activity toward subtilisin BPN' and, to a lesser extent, toward trypsin.</text>
</comment>
<comment type="subunit">
    <text>Homodimer.</text>
</comment>
<comment type="subcellular location">
    <subcellularLocation>
        <location>Secreted</location>
    </subcellularLocation>
</comment>
<comment type="similarity">
    <text evidence="3">Belongs to the protease inhibitor I16 (SSI) family.</text>
</comment>
<name>SSI_STRLI</name>
<keyword id="KW-0903">Direct protein sequencing</keyword>
<keyword id="KW-1015">Disulfide bond</keyword>
<keyword id="KW-0646">Protease inhibitor</keyword>
<keyword id="KW-0964">Secreted</keyword>
<keyword id="KW-0722">Serine protease inhibitor</keyword>
<keyword id="KW-0732">Signal</keyword>
<dbReference type="EMBL" id="M80576">
    <property type="protein sequence ID" value="AAA26801.1"/>
    <property type="molecule type" value="Genomic_DNA"/>
</dbReference>
<dbReference type="PIR" id="B42585">
    <property type="entry name" value="B42585"/>
</dbReference>
<dbReference type="SMR" id="P61153"/>
<dbReference type="MEROPS" id="I16.007"/>
<dbReference type="MEROPS" id="I16.008"/>
<dbReference type="GO" id="GO:0005576">
    <property type="term" value="C:extracellular region"/>
    <property type="evidence" value="ECO:0007669"/>
    <property type="project" value="UniProtKB-SubCell"/>
</dbReference>
<dbReference type="GO" id="GO:0004867">
    <property type="term" value="F:serine-type endopeptidase inhibitor activity"/>
    <property type="evidence" value="ECO:0007669"/>
    <property type="project" value="UniProtKB-UniRule"/>
</dbReference>
<dbReference type="Gene3D" id="3.30.350.10">
    <property type="entry name" value="Subtilisin inhibitor-like"/>
    <property type="match status" value="1"/>
</dbReference>
<dbReference type="HAMAP" id="MF_00778">
    <property type="entry name" value="SSI"/>
    <property type="match status" value="1"/>
</dbReference>
<dbReference type="InterPro" id="IPR000691">
    <property type="entry name" value="Prot_inh_I16_SSI"/>
</dbReference>
<dbReference type="InterPro" id="IPR020054">
    <property type="entry name" value="Prot_inh_SSI_I16_CS"/>
</dbReference>
<dbReference type="InterPro" id="IPR023549">
    <property type="entry name" value="Subtilisin_inhibitor"/>
</dbReference>
<dbReference type="InterPro" id="IPR036819">
    <property type="entry name" value="Subtilisin_inhibitor-like_sf"/>
</dbReference>
<dbReference type="NCBIfam" id="NF009715">
    <property type="entry name" value="PRK13244.1-1"/>
    <property type="match status" value="1"/>
</dbReference>
<dbReference type="Pfam" id="PF00720">
    <property type="entry name" value="SSI"/>
    <property type="match status" value="1"/>
</dbReference>
<dbReference type="PRINTS" id="PR00294">
    <property type="entry name" value="SSBTLNINHBTR"/>
</dbReference>
<dbReference type="SUPFAM" id="SSF55399">
    <property type="entry name" value="Subtilisin inhibitor"/>
    <property type="match status" value="1"/>
</dbReference>
<dbReference type="PROSITE" id="PS00999">
    <property type="entry name" value="SSI"/>
    <property type="match status" value="1"/>
</dbReference>
<organism>
    <name type="scientific">Streptomyces lividans</name>
    <dbReference type="NCBI Taxonomy" id="1916"/>
    <lineage>
        <taxon>Bacteria</taxon>
        <taxon>Bacillati</taxon>
        <taxon>Actinomycetota</taxon>
        <taxon>Actinomycetes</taxon>
        <taxon>Kitasatosporales</taxon>
        <taxon>Streptomycetaceae</taxon>
        <taxon>Streptomyces</taxon>
    </lineage>
</organism>
<reference key="1">
    <citation type="journal article" date="1992" name="J. Biol. Chem.">
        <title>Two novel Streptomyces protein protease inhibitors. Purification, activity, cloning, and expression.</title>
        <authorList>
            <person name="Strickler J.E."/>
            <person name="Berka T.R."/>
            <person name="Gorniak J."/>
            <person name="Fornwald J."/>
            <person name="Keys R."/>
            <person name="Rowland J.J."/>
            <person name="Rosenberg M."/>
            <person name="Taylor D.P."/>
        </authorList>
    </citation>
    <scope>NUCLEOTIDE SEQUENCE [GENOMIC DNA]</scope>
    <scope>PROTEIN SEQUENCE OF 36-85; 87-103 AND 105-143</scope>
</reference>
<reference key="2">
    <citation type="journal article" date="1992" name="J. Biochem.">
        <title>A protease inhibitor produced by Streptomyces lividans 66 exhibits inhibitory activities toward both subtilisin BPN' and trypsin.</title>
        <authorList>
            <person name="Ueda Y."/>
            <person name="Kojima S."/>
            <person name="Tsumoto K."/>
            <person name="Takeda S."/>
            <person name="Miura K."/>
            <person name="Kumagai I."/>
        </authorList>
    </citation>
    <scope>PROTEIN SEQUENCE OF 38-144</scope>
    <source>
        <strain>66 / 1326</strain>
    </source>
</reference>
<reference key="3">
    <citation type="journal article" date="1993" name="Biosci. Biotechnol. Biochem.">
        <title>High frequency of SSI-like protease inhibitors among Streptomyces.</title>
        <authorList>
            <person name="Taguchi S."/>
            <person name="Kikuchi H."/>
            <person name="Kojima S."/>
            <person name="Kumagai I."/>
            <person name="Nakase T."/>
            <person name="Miura K."/>
            <person name="Momose H."/>
        </authorList>
    </citation>
    <scope>PROTEIN SEQUENCE OF 36-71</scope>
    <source>
        <strain>66 / 1326</strain>
    </source>
</reference>
<gene>
    <name type="primary">sti1</name>
</gene>